<accession>A8H6K2</accession>
<reference key="1">
    <citation type="submission" date="2007-10" db="EMBL/GenBank/DDBJ databases">
        <title>Complete sequence of Shewanella pealeana ATCC 700345.</title>
        <authorList>
            <consortium name="US DOE Joint Genome Institute"/>
            <person name="Copeland A."/>
            <person name="Lucas S."/>
            <person name="Lapidus A."/>
            <person name="Barry K."/>
            <person name="Glavina del Rio T."/>
            <person name="Dalin E."/>
            <person name="Tice H."/>
            <person name="Pitluck S."/>
            <person name="Chertkov O."/>
            <person name="Brettin T."/>
            <person name="Bruce D."/>
            <person name="Detter J.C."/>
            <person name="Han C."/>
            <person name="Schmutz J."/>
            <person name="Larimer F."/>
            <person name="Land M."/>
            <person name="Hauser L."/>
            <person name="Kyrpides N."/>
            <person name="Kim E."/>
            <person name="Zhao J.-S.Z."/>
            <person name="Manno D."/>
            <person name="Hawari J."/>
            <person name="Richardson P."/>
        </authorList>
    </citation>
    <scope>NUCLEOTIDE SEQUENCE [LARGE SCALE GENOMIC DNA]</scope>
    <source>
        <strain>ATCC 700345 / ANG-SQ1</strain>
    </source>
</reference>
<sequence length="203" mass="21851">MAVIKGITPEQIAQICVGQYAGVDEVGRGPLIGNVVTAAVILDPNNPIEGLNDSKKLSEKKRELLFEQIQQKALSVSVGSATPAEIDELNILHATMLAMQRAVAGLNIKPSSVLVDGNRTPDFGVESHAIIKGDGLIDAISAASIIAKVVRDREMDALALLYPEYGFEKHKGYPTKAHFEALAQHGVLPEHRKSFRPVREALA</sequence>
<protein>
    <recommendedName>
        <fullName evidence="1">Ribonuclease HII</fullName>
        <shortName evidence="1">RNase HII</shortName>
        <ecNumber evidence="1">3.1.26.4</ecNumber>
    </recommendedName>
</protein>
<evidence type="ECO:0000255" key="1">
    <source>
        <dbReference type="HAMAP-Rule" id="MF_00052"/>
    </source>
</evidence>
<evidence type="ECO:0000255" key="2">
    <source>
        <dbReference type="PROSITE-ProRule" id="PRU01319"/>
    </source>
</evidence>
<proteinExistence type="inferred from homology"/>
<organism>
    <name type="scientific">Shewanella pealeana (strain ATCC 700345 / ANG-SQ1)</name>
    <dbReference type="NCBI Taxonomy" id="398579"/>
    <lineage>
        <taxon>Bacteria</taxon>
        <taxon>Pseudomonadati</taxon>
        <taxon>Pseudomonadota</taxon>
        <taxon>Gammaproteobacteria</taxon>
        <taxon>Alteromonadales</taxon>
        <taxon>Shewanellaceae</taxon>
        <taxon>Shewanella</taxon>
    </lineage>
</organism>
<gene>
    <name evidence="1" type="primary">rnhB</name>
    <name type="ordered locus">Spea_2871</name>
</gene>
<keyword id="KW-0963">Cytoplasm</keyword>
<keyword id="KW-0255">Endonuclease</keyword>
<keyword id="KW-0378">Hydrolase</keyword>
<keyword id="KW-0464">Manganese</keyword>
<keyword id="KW-0479">Metal-binding</keyword>
<keyword id="KW-0540">Nuclease</keyword>
<keyword id="KW-1185">Reference proteome</keyword>
<dbReference type="EC" id="3.1.26.4" evidence="1"/>
<dbReference type="EMBL" id="CP000851">
    <property type="protein sequence ID" value="ABV88189.1"/>
    <property type="molecule type" value="Genomic_DNA"/>
</dbReference>
<dbReference type="RefSeq" id="WP_012156094.1">
    <property type="nucleotide sequence ID" value="NC_009901.1"/>
</dbReference>
<dbReference type="SMR" id="A8H6K2"/>
<dbReference type="STRING" id="398579.Spea_2871"/>
<dbReference type="KEGG" id="spl:Spea_2871"/>
<dbReference type="eggNOG" id="COG0164">
    <property type="taxonomic scope" value="Bacteria"/>
</dbReference>
<dbReference type="HOGENOM" id="CLU_036532_3_2_6"/>
<dbReference type="OrthoDB" id="9803420at2"/>
<dbReference type="Proteomes" id="UP000002608">
    <property type="component" value="Chromosome"/>
</dbReference>
<dbReference type="GO" id="GO:0005737">
    <property type="term" value="C:cytoplasm"/>
    <property type="evidence" value="ECO:0007669"/>
    <property type="project" value="UniProtKB-SubCell"/>
</dbReference>
<dbReference type="GO" id="GO:0032299">
    <property type="term" value="C:ribonuclease H2 complex"/>
    <property type="evidence" value="ECO:0007669"/>
    <property type="project" value="TreeGrafter"/>
</dbReference>
<dbReference type="GO" id="GO:0030145">
    <property type="term" value="F:manganese ion binding"/>
    <property type="evidence" value="ECO:0007669"/>
    <property type="project" value="UniProtKB-UniRule"/>
</dbReference>
<dbReference type="GO" id="GO:0003723">
    <property type="term" value="F:RNA binding"/>
    <property type="evidence" value="ECO:0007669"/>
    <property type="project" value="InterPro"/>
</dbReference>
<dbReference type="GO" id="GO:0004523">
    <property type="term" value="F:RNA-DNA hybrid ribonuclease activity"/>
    <property type="evidence" value="ECO:0007669"/>
    <property type="project" value="UniProtKB-UniRule"/>
</dbReference>
<dbReference type="GO" id="GO:0043137">
    <property type="term" value="P:DNA replication, removal of RNA primer"/>
    <property type="evidence" value="ECO:0007669"/>
    <property type="project" value="TreeGrafter"/>
</dbReference>
<dbReference type="GO" id="GO:0006298">
    <property type="term" value="P:mismatch repair"/>
    <property type="evidence" value="ECO:0007669"/>
    <property type="project" value="TreeGrafter"/>
</dbReference>
<dbReference type="CDD" id="cd07182">
    <property type="entry name" value="RNase_HII_bacteria_HII_like"/>
    <property type="match status" value="1"/>
</dbReference>
<dbReference type="FunFam" id="3.30.420.10:FF:000006">
    <property type="entry name" value="Ribonuclease HII"/>
    <property type="match status" value="1"/>
</dbReference>
<dbReference type="Gene3D" id="3.30.420.10">
    <property type="entry name" value="Ribonuclease H-like superfamily/Ribonuclease H"/>
    <property type="match status" value="1"/>
</dbReference>
<dbReference type="HAMAP" id="MF_00052_B">
    <property type="entry name" value="RNase_HII_B"/>
    <property type="match status" value="1"/>
</dbReference>
<dbReference type="InterPro" id="IPR022898">
    <property type="entry name" value="RNase_HII"/>
</dbReference>
<dbReference type="InterPro" id="IPR001352">
    <property type="entry name" value="RNase_HII/HIII"/>
</dbReference>
<dbReference type="InterPro" id="IPR024567">
    <property type="entry name" value="RNase_HII/HIII_dom"/>
</dbReference>
<dbReference type="InterPro" id="IPR012337">
    <property type="entry name" value="RNaseH-like_sf"/>
</dbReference>
<dbReference type="InterPro" id="IPR036397">
    <property type="entry name" value="RNaseH_sf"/>
</dbReference>
<dbReference type="NCBIfam" id="NF000594">
    <property type="entry name" value="PRK00015.1-1"/>
    <property type="match status" value="1"/>
</dbReference>
<dbReference type="NCBIfam" id="NF000595">
    <property type="entry name" value="PRK00015.1-3"/>
    <property type="match status" value="1"/>
</dbReference>
<dbReference type="NCBIfam" id="NF000596">
    <property type="entry name" value="PRK00015.1-4"/>
    <property type="match status" value="1"/>
</dbReference>
<dbReference type="PANTHER" id="PTHR10954">
    <property type="entry name" value="RIBONUCLEASE H2 SUBUNIT A"/>
    <property type="match status" value="1"/>
</dbReference>
<dbReference type="PANTHER" id="PTHR10954:SF18">
    <property type="entry name" value="RIBONUCLEASE HII"/>
    <property type="match status" value="1"/>
</dbReference>
<dbReference type="Pfam" id="PF01351">
    <property type="entry name" value="RNase_HII"/>
    <property type="match status" value="1"/>
</dbReference>
<dbReference type="SUPFAM" id="SSF53098">
    <property type="entry name" value="Ribonuclease H-like"/>
    <property type="match status" value="1"/>
</dbReference>
<dbReference type="PROSITE" id="PS51975">
    <property type="entry name" value="RNASE_H_2"/>
    <property type="match status" value="1"/>
</dbReference>
<comment type="function">
    <text evidence="1">Endonuclease that specifically degrades the RNA of RNA-DNA hybrids.</text>
</comment>
<comment type="catalytic activity">
    <reaction evidence="1">
        <text>Endonucleolytic cleavage to 5'-phosphomonoester.</text>
        <dbReference type="EC" id="3.1.26.4"/>
    </reaction>
</comment>
<comment type="cofactor">
    <cofactor evidence="1">
        <name>Mn(2+)</name>
        <dbReference type="ChEBI" id="CHEBI:29035"/>
    </cofactor>
    <cofactor evidence="1">
        <name>Mg(2+)</name>
        <dbReference type="ChEBI" id="CHEBI:18420"/>
    </cofactor>
    <text evidence="1">Manganese or magnesium. Binds 1 divalent metal ion per monomer in the absence of substrate. May bind a second metal ion after substrate binding.</text>
</comment>
<comment type="subcellular location">
    <subcellularLocation>
        <location evidence="1">Cytoplasm</location>
    </subcellularLocation>
</comment>
<comment type="similarity">
    <text evidence="1">Belongs to the RNase HII family.</text>
</comment>
<feature type="chain" id="PRO_1000074935" description="Ribonuclease HII">
    <location>
        <begin position="1"/>
        <end position="203"/>
    </location>
</feature>
<feature type="domain" description="RNase H type-2" evidence="2">
    <location>
        <begin position="18"/>
        <end position="203"/>
    </location>
</feature>
<feature type="binding site" evidence="1">
    <location>
        <position position="24"/>
    </location>
    <ligand>
        <name>a divalent metal cation</name>
        <dbReference type="ChEBI" id="CHEBI:60240"/>
    </ligand>
</feature>
<feature type="binding site" evidence="1">
    <location>
        <position position="25"/>
    </location>
    <ligand>
        <name>a divalent metal cation</name>
        <dbReference type="ChEBI" id="CHEBI:60240"/>
    </ligand>
</feature>
<feature type="binding site" evidence="1">
    <location>
        <position position="116"/>
    </location>
    <ligand>
        <name>a divalent metal cation</name>
        <dbReference type="ChEBI" id="CHEBI:60240"/>
    </ligand>
</feature>
<name>RNH2_SHEPA</name>